<gene>
    <name evidence="1" type="primary">pdxY</name>
    <name type="ordered locus">plu2595</name>
</gene>
<comment type="function">
    <text evidence="1">Pyridoxal kinase involved in the salvage pathway of pyridoxal 5'-phosphate (PLP). Catalyzes the phosphorylation of pyridoxal to PLP.</text>
</comment>
<comment type="catalytic activity">
    <reaction evidence="1">
        <text>pyridoxal + ATP = pyridoxal 5'-phosphate + ADP + H(+)</text>
        <dbReference type="Rhea" id="RHEA:10224"/>
        <dbReference type="ChEBI" id="CHEBI:15378"/>
        <dbReference type="ChEBI" id="CHEBI:17310"/>
        <dbReference type="ChEBI" id="CHEBI:30616"/>
        <dbReference type="ChEBI" id="CHEBI:456216"/>
        <dbReference type="ChEBI" id="CHEBI:597326"/>
        <dbReference type="EC" id="2.7.1.35"/>
    </reaction>
</comment>
<comment type="cofactor">
    <cofactor evidence="1">
        <name>Mg(2+)</name>
        <dbReference type="ChEBI" id="CHEBI:18420"/>
    </cofactor>
</comment>
<comment type="pathway">
    <text evidence="1">Cofactor metabolism; pyridoxal 5'-phosphate salvage; pyridoxal 5'-phosphate from pyridoxal: step 1/1.</text>
</comment>
<comment type="subunit">
    <text evidence="1">Homodimer.</text>
</comment>
<comment type="similarity">
    <text evidence="1">Belongs to the pyridoxine kinase family. PdxY subfamily.</text>
</comment>
<evidence type="ECO:0000255" key="1">
    <source>
        <dbReference type="HAMAP-Rule" id="MF_01639"/>
    </source>
</evidence>
<proteinExistence type="inferred from homology"/>
<keyword id="KW-0067">ATP-binding</keyword>
<keyword id="KW-0418">Kinase</keyword>
<keyword id="KW-0460">Magnesium</keyword>
<keyword id="KW-0547">Nucleotide-binding</keyword>
<keyword id="KW-1185">Reference proteome</keyword>
<keyword id="KW-0808">Transferase</keyword>
<dbReference type="EC" id="2.7.1.35" evidence="1"/>
<dbReference type="EMBL" id="BX571867">
    <property type="protein sequence ID" value="CAE14969.1"/>
    <property type="molecule type" value="Genomic_DNA"/>
</dbReference>
<dbReference type="RefSeq" id="WP_011146817.1">
    <property type="nucleotide sequence ID" value="NC_005126.1"/>
</dbReference>
<dbReference type="SMR" id="Q7N3W7"/>
<dbReference type="STRING" id="243265.plu2595"/>
<dbReference type="GeneID" id="48848854"/>
<dbReference type="KEGG" id="plu:plu2595"/>
<dbReference type="eggNOG" id="COG2240">
    <property type="taxonomic scope" value="Bacteria"/>
</dbReference>
<dbReference type="HOGENOM" id="CLU_046496_3_0_6"/>
<dbReference type="OrthoDB" id="9800808at2"/>
<dbReference type="UniPathway" id="UPA01068">
    <property type="reaction ID" value="UER00298"/>
</dbReference>
<dbReference type="Proteomes" id="UP000002514">
    <property type="component" value="Chromosome"/>
</dbReference>
<dbReference type="GO" id="GO:0005829">
    <property type="term" value="C:cytosol"/>
    <property type="evidence" value="ECO:0007669"/>
    <property type="project" value="TreeGrafter"/>
</dbReference>
<dbReference type="GO" id="GO:0005524">
    <property type="term" value="F:ATP binding"/>
    <property type="evidence" value="ECO:0007669"/>
    <property type="project" value="UniProtKB-UniRule"/>
</dbReference>
<dbReference type="GO" id="GO:0000287">
    <property type="term" value="F:magnesium ion binding"/>
    <property type="evidence" value="ECO:0007669"/>
    <property type="project" value="UniProtKB-UniRule"/>
</dbReference>
<dbReference type="GO" id="GO:0008478">
    <property type="term" value="F:pyridoxal kinase activity"/>
    <property type="evidence" value="ECO:0007669"/>
    <property type="project" value="UniProtKB-UniRule"/>
</dbReference>
<dbReference type="GO" id="GO:0009443">
    <property type="term" value="P:pyridoxal 5'-phosphate salvage"/>
    <property type="evidence" value="ECO:0007669"/>
    <property type="project" value="UniProtKB-UniRule"/>
</dbReference>
<dbReference type="CDD" id="cd01173">
    <property type="entry name" value="pyridoxal_pyridoxamine_kinase"/>
    <property type="match status" value="1"/>
</dbReference>
<dbReference type="FunFam" id="3.40.1190.20:FF:000008">
    <property type="entry name" value="Pyridoxal kinase PdxY"/>
    <property type="match status" value="1"/>
</dbReference>
<dbReference type="Gene3D" id="3.40.1190.20">
    <property type="match status" value="1"/>
</dbReference>
<dbReference type="HAMAP" id="MF_01639">
    <property type="entry name" value="PdxY"/>
    <property type="match status" value="1"/>
</dbReference>
<dbReference type="InterPro" id="IPR013749">
    <property type="entry name" value="PM/HMP-P_kinase-1"/>
</dbReference>
<dbReference type="InterPro" id="IPR004625">
    <property type="entry name" value="PyrdxlKinase"/>
</dbReference>
<dbReference type="InterPro" id="IPR023685">
    <property type="entry name" value="Pyridoxal_kinase_PdxY"/>
</dbReference>
<dbReference type="InterPro" id="IPR029056">
    <property type="entry name" value="Ribokinase-like"/>
</dbReference>
<dbReference type="NCBIfam" id="NF004398">
    <property type="entry name" value="PRK05756.1"/>
    <property type="match status" value="1"/>
</dbReference>
<dbReference type="NCBIfam" id="TIGR00687">
    <property type="entry name" value="pyridox_kin"/>
    <property type="match status" value="1"/>
</dbReference>
<dbReference type="PANTHER" id="PTHR10534">
    <property type="entry name" value="PYRIDOXAL KINASE"/>
    <property type="match status" value="1"/>
</dbReference>
<dbReference type="PANTHER" id="PTHR10534:SF2">
    <property type="entry name" value="PYRIDOXAL KINASE"/>
    <property type="match status" value="1"/>
</dbReference>
<dbReference type="Pfam" id="PF08543">
    <property type="entry name" value="Phos_pyr_kin"/>
    <property type="match status" value="1"/>
</dbReference>
<dbReference type="SUPFAM" id="SSF53613">
    <property type="entry name" value="Ribokinase-like"/>
    <property type="match status" value="1"/>
</dbReference>
<name>PDXY_PHOLL</name>
<organism>
    <name type="scientific">Photorhabdus laumondii subsp. laumondii (strain DSM 15139 / CIP 105565 / TT01)</name>
    <name type="common">Photorhabdus luminescens subsp. laumondii</name>
    <dbReference type="NCBI Taxonomy" id="243265"/>
    <lineage>
        <taxon>Bacteria</taxon>
        <taxon>Pseudomonadati</taxon>
        <taxon>Pseudomonadota</taxon>
        <taxon>Gammaproteobacteria</taxon>
        <taxon>Enterobacterales</taxon>
        <taxon>Morganellaceae</taxon>
        <taxon>Photorhabdus</taxon>
    </lineage>
</organism>
<accession>Q7N3W7</accession>
<sequence length="287" mass="31748">MKNILSIQSHVVFGHAGNSAAEFPMRRMGVNVWPLNTVQFSNHTQYAQWKGCVMPANHLTEIVQGIEEIEQLKSCHAVLSGYIGSAEQGGHIIDIVKRVKAVNPDAWYFCDPVMGHPEKGCIVVPGVAEFLCKDALPVSDIIAPNLLELETLSMQKVTNVEQAVMAARTLCDKGPDIVLVKHLSRAGYRTDRFEMLLVTKEHSWHVSRPLVDFGERQPVGVGDLTSGLLLVNLLKGESLQTALEHVAAAVYEVMVTTKEMGEYELQIVAAQDRMVAPNHKFWAIQLD</sequence>
<feature type="chain" id="PRO_0000269817" description="Pyridoxal kinase PdxY">
    <location>
        <begin position="1"/>
        <end position="287"/>
    </location>
</feature>
<feature type="binding site" evidence="1">
    <location>
        <position position="9"/>
    </location>
    <ligand>
        <name>substrate</name>
    </ligand>
</feature>
<feature type="binding site" evidence="1">
    <location>
        <begin position="44"/>
        <end position="45"/>
    </location>
    <ligand>
        <name>substrate</name>
    </ligand>
</feature>
<feature type="binding site" evidence="1">
    <location>
        <position position="111"/>
    </location>
    <ligand>
        <name>ATP</name>
        <dbReference type="ChEBI" id="CHEBI:30616"/>
    </ligand>
</feature>
<feature type="binding site" evidence="1">
    <location>
        <position position="143"/>
    </location>
    <ligand>
        <name>ATP</name>
        <dbReference type="ChEBI" id="CHEBI:30616"/>
    </ligand>
</feature>
<feature type="binding site" evidence="1">
    <location>
        <position position="148"/>
    </location>
    <ligand>
        <name>ATP</name>
        <dbReference type="ChEBI" id="CHEBI:30616"/>
    </ligand>
</feature>
<feature type="binding site" evidence="1">
    <location>
        <position position="181"/>
    </location>
    <ligand>
        <name>ATP</name>
        <dbReference type="ChEBI" id="CHEBI:30616"/>
    </ligand>
</feature>
<feature type="binding site" evidence="1">
    <location>
        <begin position="208"/>
        <end position="211"/>
    </location>
    <ligand>
        <name>ATP</name>
        <dbReference type="ChEBI" id="CHEBI:30616"/>
    </ligand>
</feature>
<feature type="binding site" evidence="1">
    <location>
        <position position="223"/>
    </location>
    <ligand>
        <name>substrate</name>
    </ligand>
</feature>
<protein>
    <recommendedName>
        <fullName evidence="1">Pyridoxal kinase PdxY</fullName>
        <shortName evidence="1">PL kinase</shortName>
        <ecNumber evidence="1">2.7.1.35</ecNumber>
    </recommendedName>
</protein>
<reference key="1">
    <citation type="journal article" date="2003" name="Nat. Biotechnol.">
        <title>The genome sequence of the entomopathogenic bacterium Photorhabdus luminescens.</title>
        <authorList>
            <person name="Duchaud E."/>
            <person name="Rusniok C."/>
            <person name="Frangeul L."/>
            <person name="Buchrieser C."/>
            <person name="Givaudan A."/>
            <person name="Taourit S."/>
            <person name="Bocs S."/>
            <person name="Boursaux-Eude C."/>
            <person name="Chandler M."/>
            <person name="Charles J.-F."/>
            <person name="Dassa E."/>
            <person name="Derose R."/>
            <person name="Derzelle S."/>
            <person name="Freyssinet G."/>
            <person name="Gaudriault S."/>
            <person name="Medigue C."/>
            <person name="Lanois A."/>
            <person name="Powell K."/>
            <person name="Siguier P."/>
            <person name="Vincent R."/>
            <person name="Wingate V."/>
            <person name="Zouine M."/>
            <person name="Glaser P."/>
            <person name="Boemare N."/>
            <person name="Danchin A."/>
            <person name="Kunst F."/>
        </authorList>
    </citation>
    <scope>NUCLEOTIDE SEQUENCE [LARGE SCALE GENOMIC DNA]</scope>
    <source>
        <strain>DSM 15139 / CIP 105565 / TT01</strain>
    </source>
</reference>